<accession>Q48EF5</accession>
<feature type="chain" id="PRO_0000235471" description="Phospho-N-acetylmuramoyl-pentapeptide-transferase">
    <location>
        <begin position="1"/>
        <end position="360"/>
    </location>
</feature>
<feature type="transmembrane region" description="Helical" evidence="1">
    <location>
        <begin position="25"/>
        <end position="45"/>
    </location>
</feature>
<feature type="transmembrane region" description="Helical" evidence="1">
    <location>
        <begin position="73"/>
        <end position="93"/>
    </location>
</feature>
<feature type="transmembrane region" description="Helical" evidence="1">
    <location>
        <begin position="97"/>
        <end position="117"/>
    </location>
</feature>
<feature type="transmembrane region" description="Helical" evidence="1">
    <location>
        <begin position="135"/>
        <end position="155"/>
    </location>
</feature>
<feature type="transmembrane region" description="Helical" evidence="1">
    <location>
        <begin position="170"/>
        <end position="190"/>
    </location>
</feature>
<feature type="transmembrane region" description="Helical" evidence="1">
    <location>
        <begin position="199"/>
        <end position="219"/>
    </location>
</feature>
<feature type="transmembrane region" description="Helical" evidence="1">
    <location>
        <begin position="236"/>
        <end position="256"/>
    </location>
</feature>
<feature type="transmembrane region" description="Helical" evidence="1">
    <location>
        <begin position="263"/>
        <end position="283"/>
    </location>
</feature>
<feature type="transmembrane region" description="Helical" evidence="1">
    <location>
        <begin position="288"/>
        <end position="308"/>
    </location>
</feature>
<feature type="transmembrane region" description="Helical" evidence="1">
    <location>
        <begin position="338"/>
        <end position="358"/>
    </location>
</feature>
<dbReference type="EC" id="2.7.8.13" evidence="1"/>
<dbReference type="EMBL" id="CP000058">
    <property type="protein sequence ID" value="AAZ34143.1"/>
    <property type="molecule type" value="Genomic_DNA"/>
</dbReference>
<dbReference type="RefSeq" id="WP_002555049.1">
    <property type="nucleotide sequence ID" value="NC_005773.3"/>
</dbReference>
<dbReference type="SMR" id="Q48EF5"/>
<dbReference type="GeneID" id="69861162"/>
<dbReference type="KEGG" id="psp:PSPPH_4111"/>
<dbReference type="eggNOG" id="COG0472">
    <property type="taxonomic scope" value="Bacteria"/>
</dbReference>
<dbReference type="HOGENOM" id="CLU_023982_0_0_6"/>
<dbReference type="UniPathway" id="UPA00219"/>
<dbReference type="Proteomes" id="UP000000551">
    <property type="component" value="Chromosome"/>
</dbReference>
<dbReference type="GO" id="GO:0005886">
    <property type="term" value="C:plasma membrane"/>
    <property type="evidence" value="ECO:0007669"/>
    <property type="project" value="UniProtKB-SubCell"/>
</dbReference>
<dbReference type="GO" id="GO:0046872">
    <property type="term" value="F:metal ion binding"/>
    <property type="evidence" value="ECO:0007669"/>
    <property type="project" value="UniProtKB-KW"/>
</dbReference>
<dbReference type="GO" id="GO:0008963">
    <property type="term" value="F:phospho-N-acetylmuramoyl-pentapeptide-transferase activity"/>
    <property type="evidence" value="ECO:0007669"/>
    <property type="project" value="UniProtKB-UniRule"/>
</dbReference>
<dbReference type="GO" id="GO:0051992">
    <property type="term" value="F:UDP-N-acetylmuramoyl-L-alanyl-D-glutamyl-meso-2,6-diaminopimelyl-D-alanyl-D-alanine:undecaprenyl-phosphate transferase activity"/>
    <property type="evidence" value="ECO:0007669"/>
    <property type="project" value="RHEA"/>
</dbReference>
<dbReference type="GO" id="GO:0051301">
    <property type="term" value="P:cell division"/>
    <property type="evidence" value="ECO:0007669"/>
    <property type="project" value="UniProtKB-KW"/>
</dbReference>
<dbReference type="GO" id="GO:0071555">
    <property type="term" value="P:cell wall organization"/>
    <property type="evidence" value="ECO:0007669"/>
    <property type="project" value="UniProtKB-KW"/>
</dbReference>
<dbReference type="GO" id="GO:0009252">
    <property type="term" value="P:peptidoglycan biosynthetic process"/>
    <property type="evidence" value="ECO:0007669"/>
    <property type="project" value="UniProtKB-UniRule"/>
</dbReference>
<dbReference type="GO" id="GO:0008360">
    <property type="term" value="P:regulation of cell shape"/>
    <property type="evidence" value="ECO:0007669"/>
    <property type="project" value="UniProtKB-KW"/>
</dbReference>
<dbReference type="CDD" id="cd06852">
    <property type="entry name" value="GT_MraY"/>
    <property type="match status" value="1"/>
</dbReference>
<dbReference type="HAMAP" id="MF_00038">
    <property type="entry name" value="MraY"/>
    <property type="match status" value="1"/>
</dbReference>
<dbReference type="InterPro" id="IPR000715">
    <property type="entry name" value="Glycosyl_transferase_4"/>
</dbReference>
<dbReference type="InterPro" id="IPR003524">
    <property type="entry name" value="PNAcMuramoyl-5peptid_Trfase"/>
</dbReference>
<dbReference type="InterPro" id="IPR018480">
    <property type="entry name" value="PNAcMuramoyl-5peptid_Trfase_CS"/>
</dbReference>
<dbReference type="NCBIfam" id="TIGR00445">
    <property type="entry name" value="mraY"/>
    <property type="match status" value="1"/>
</dbReference>
<dbReference type="PANTHER" id="PTHR22926">
    <property type="entry name" value="PHOSPHO-N-ACETYLMURAMOYL-PENTAPEPTIDE-TRANSFERASE"/>
    <property type="match status" value="1"/>
</dbReference>
<dbReference type="PANTHER" id="PTHR22926:SF5">
    <property type="entry name" value="PHOSPHO-N-ACETYLMURAMOYL-PENTAPEPTIDE-TRANSFERASE HOMOLOG"/>
    <property type="match status" value="1"/>
</dbReference>
<dbReference type="Pfam" id="PF00953">
    <property type="entry name" value="Glycos_transf_4"/>
    <property type="match status" value="1"/>
</dbReference>
<dbReference type="Pfam" id="PF10555">
    <property type="entry name" value="MraY_sig1"/>
    <property type="match status" value="1"/>
</dbReference>
<dbReference type="PROSITE" id="PS01347">
    <property type="entry name" value="MRAY_1"/>
    <property type="match status" value="1"/>
</dbReference>
<dbReference type="PROSITE" id="PS01348">
    <property type="entry name" value="MRAY_2"/>
    <property type="match status" value="1"/>
</dbReference>
<keyword id="KW-0131">Cell cycle</keyword>
<keyword id="KW-0132">Cell division</keyword>
<keyword id="KW-0997">Cell inner membrane</keyword>
<keyword id="KW-1003">Cell membrane</keyword>
<keyword id="KW-0133">Cell shape</keyword>
<keyword id="KW-0961">Cell wall biogenesis/degradation</keyword>
<keyword id="KW-0460">Magnesium</keyword>
<keyword id="KW-0472">Membrane</keyword>
<keyword id="KW-0479">Metal-binding</keyword>
<keyword id="KW-0573">Peptidoglycan synthesis</keyword>
<keyword id="KW-0808">Transferase</keyword>
<keyword id="KW-0812">Transmembrane</keyword>
<keyword id="KW-1133">Transmembrane helix</keyword>
<protein>
    <recommendedName>
        <fullName evidence="1">Phospho-N-acetylmuramoyl-pentapeptide-transferase</fullName>
        <ecNumber evidence="1">2.7.8.13</ecNumber>
    </recommendedName>
    <alternativeName>
        <fullName evidence="1">UDP-MurNAc-pentapeptide phosphotransferase</fullName>
    </alternativeName>
</protein>
<proteinExistence type="inferred from homology"/>
<evidence type="ECO:0000255" key="1">
    <source>
        <dbReference type="HAMAP-Rule" id="MF_00038"/>
    </source>
</evidence>
<name>MRAY_PSE14</name>
<organism>
    <name type="scientific">Pseudomonas savastanoi pv. phaseolicola (strain 1448A / Race 6)</name>
    <name type="common">Pseudomonas syringae pv. phaseolicola (strain 1448A / Race 6)</name>
    <dbReference type="NCBI Taxonomy" id="264730"/>
    <lineage>
        <taxon>Bacteria</taxon>
        <taxon>Pseudomonadati</taxon>
        <taxon>Pseudomonadota</taxon>
        <taxon>Gammaproteobacteria</taxon>
        <taxon>Pseudomonadales</taxon>
        <taxon>Pseudomonadaceae</taxon>
        <taxon>Pseudomonas</taxon>
    </lineage>
</organism>
<reference key="1">
    <citation type="journal article" date="2005" name="J. Bacteriol.">
        <title>Whole-genome sequence analysis of Pseudomonas syringae pv. phaseolicola 1448A reveals divergence among pathovars in genes involved in virulence and transposition.</title>
        <authorList>
            <person name="Joardar V."/>
            <person name="Lindeberg M."/>
            <person name="Jackson R.W."/>
            <person name="Selengut J."/>
            <person name="Dodson R."/>
            <person name="Brinkac L.M."/>
            <person name="Daugherty S.C."/>
            <person name="DeBoy R.T."/>
            <person name="Durkin A.S."/>
            <person name="Gwinn Giglio M."/>
            <person name="Madupu R."/>
            <person name="Nelson W.C."/>
            <person name="Rosovitz M.J."/>
            <person name="Sullivan S.A."/>
            <person name="Crabtree J."/>
            <person name="Creasy T."/>
            <person name="Davidsen T.M."/>
            <person name="Haft D.H."/>
            <person name="Zafar N."/>
            <person name="Zhou L."/>
            <person name="Halpin R."/>
            <person name="Holley T."/>
            <person name="Khouri H.M."/>
            <person name="Feldblyum T.V."/>
            <person name="White O."/>
            <person name="Fraser C.M."/>
            <person name="Chatterjee A.K."/>
            <person name="Cartinhour S."/>
            <person name="Schneider D."/>
            <person name="Mansfield J.W."/>
            <person name="Collmer A."/>
            <person name="Buell R."/>
        </authorList>
    </citation>
    <scope>NUCLEOTIDE SEQUENCE [LARGE SCALE GENOMIC DNA]</scope>
    <source>
        <strain>1448A / Race 6</strain>
    </source>
</reference>
<gene>
    <name evidence="1" type="primary">mraY</name>
    <name type="ordered locus">PSPPH_4111</name>
</gene>
<comment type="function">
    <text evidence="1">Catalyzes the initial step of the lipid cycle reactions in the biosynthesis of the cell wall peptidoglycan: transfers peptidoglycan precursor phospho-MurNAc-pentapeptide from UDP-MurNAc-pentapeptide onto the lipid carrier undecaprenyl phosphate, yielding undecaprenyl-pyrophosphoryl-MurNAc-pentapeptide, known as lipid I.</text>
</comment>
<comment type="catalytic activity">
    <reaction evidence="1">
        <text>UDP-N-acetyl-alpha-D-muramoyl-L-alanyl-gamma-D-glutamyl-meso-2,6-diaminopimeloyl-D-alanyl-D-alanine + di-trans,octa-cis-undecaprenyl phosphate = di-trans,octa-cis-undecaprenyl diphospho-N-acetyl-alpha-D-muramoyl-L-alanyl-D-glutamyl-meso-2,6-diaminopimeloyl-D-alanyl-D-alanine + UMP</text>
        <dbReference type="Rhea" id="RHEA:28386"/>
        <dbReference type="ChEBI" id="CHEBI:57865"/>
        <dbReference type="ChEBI" id="CHEBI:60392"/>
        <dbReference type="ChEBI" id="CHEBI:61386"/>
        <dbReference type="ChEBI" id="CHEBI:61387"/>
        <dbReference type="EC" id="2.7.8.13"/>
    </reaction>
</comment>
<comment type="cofactor">
    <cofactor evidence="1">
        <name>Mg(2+)</name>
        <dbReference type="ChEBI" id="CHEBI:18420"/>
    </cofactor>
</comment>
<comment type="pathway">
    <text evidence="1">Cell wall biogenesis; peptidoglycan biosynthesis.</text>
</comment>
<comment type="subcellular location">
    <subcellularLocation>
        <location evidence="1">Cell inner membrane</location>
        <topology evidence="1">Multi-pass membrane protein</topology>
    </subcellularLocation>
</comment>
<comment type="similarity">
    <text evidence="1">Belongs to the glycosyltransferase 4 family. MraY subfamily.</text>
</comment>
<sequence>MLLLLAEFLQQFYKGFAVFQYLSLRGILGVLTALTLSLCLGPWMIRTLQMRQIGQSVRNDGPQSHLSKSGTPTMGGALILSSIGISTLLWADLSNRYVWVVLLVTLLFGAIGWVDDYRKVIEKNSRGLPSRWKYFWQSVFGLCAAIFLYTTAPSATETTLIVPMLKDVRIPLGIGFIVLTYFVIVGSSNAVNLTDGLDGLAIMPTVMVGGALGIFCYLSGNVKFAEYLLIPYVPGAGELIVFSGALIGAGLGFLWFNTYPAQVFMGDVGALALGAALGTMAVIVRQEIVLFIMGGVFVMETLSVVIQVASFKLTGRRVFRMAPIHHHFELKGWPEPRVIVRFWIITVILVLIGLATLKLR</sequence>